<name>KCY_RICFE</name>
<sequence>MVDLKTKAFDFSQNFTISLDGPAASGKGTIGLILAKKFSLKYFQSSIVYRQLAFDCINQKIDVTDIDAVIALSKELNLDNNFDLENEDIGNIASQIAVISEVRNNLNKYLINLVKTTLRIIMEGRDIGTVIAPDADLKVFITANPQIRAERRYKQLQAKGKTCILDEILRQIILRDKRDKERKAAPLLPASDALIIDTSELSAIEVVEEITNYIKNKLT</sequence>
<keyword id="KW-0067">ATP-binding</keyword>
<keyword id="KW-0963">Cytoplasm</keyword>
<keyword id="KW-0418">Kinase</keyword>
<keyword id="KW-0547">Nucleotide-binding</keyword>
<keyword id="KW-0808">Transferase</keyword>
<proteinExistence type="inferred from homology"/>
<organism>
    <name type="scientific">Rickettsia felis (strain ATCC VR-1525 / URRWXCal2)</name>
    <name type="common">Rickettsia azadi</name>
    <dbReference type="NCBI Taxonomy" id="315456"/>
    <lineage>
        <taxon>Bacteria</taxon>
        <taxon>Pseudomonadati</taxon>
        <taxon>Pseudomonadota</taxon>
        <taxon>Alphaproteobacteria</taxon>
        <taxon>Rickettsiales</taxon>
        <taxon>Rickettsiaceae</taxon>
        <taxon>Rickettsieae</taxon>
        <taxon>Rickettsia</taxon>
        <taxon>spotted fever group</taxon>
    </lineage>
</organism>
<evidence type="ECO:0000255" key="1">
    <source>
        <dbReference type="HAMAP-Rule" id="MF_00238"/>
    </source>
</evidence>
<accession>Q4ULF2</accession>
<gene>
    <name evidence="1" type="primary">cmk</name>
    <name type="ordered locus">RF_0770</name>
</gene>
<protein>
    <recommendedName>
        <fullName evidence="1">Cytidylate kinase</fullName>
        <shortName evidence="1">CK</shortName>
        <ecNumber evidence="1">2.7.4.25</ecNumber>
    </recommendedName>
    <alternativeName>
        <fullName evidence="1">Cytidine monophosphate kinase</fullName>
        <shortName evidence="1">CMP kinase</shortName>
    </alternativeName>
</protein>
<feature type="chain" id="PRO_0000277983" description="Cytidylate kinase">
    <location>
        <begin position="1"/>
        <end position="219"/>
    </location>
</feature>
<feature type="binding site" evidence="1">
    <location>
        <begin position="21"/>
        <end position="29"/>
    </location>
    <ligand>
        <name>ATP</name>
        <dbReference type="ChEBI" id="CHEBI:30616"/>
    </ligand>
</feature>
<comment type="catalytic activity">
    <reaction evidence="1">
        <text>CMP + ATP = CDP + ADP</text>
        <dbReference type="Rhea" id="RHEA:11600"/>
        <dbReference type="ChEBI" id="CHEBI:30616"/>
        <dbReference type="ChEBI" id="CHEBI:58069"/>
        <dbReference type="ChEBI" id="CHEBI:60377"/>
        <dbReference type="ChEBI" id="CHEBI:456216"/>
        <dbReference type="EC" id="2.7.4.25"/>
    </reaction>
</comment>
<comment type="catalytic activity">
    <reaction evidence="1">
        <text>dCMP + ATP = dCDP + ADP</text>
        <dbReference type="Rhea" id="RHEA:25094"/>
        <dbReference type="ChEBI" id="CHEBI:30616"/>
        <dbReference type="ChEBI" id="CHEBI:57566"/>
        <dbReference type="ChEBI" id="CHEBI:58593"/>
        <dbReference type="ChEBI" id="CHEBI:456216"/>
        <dbReference type="EC" id="2.7.4.25"/>
    </reaction>
</comment>
<comment type="subcellular location">
    <subcellularLocation>
        <location evidence="1">Cytoplasm</location>
    </subcellularLocation>
</comment>
<comment type="similarity">
    <text evidence="1">Belongs to the cytidylate kinase family. Type 1 subfamily.</text>
</comment>
<dbReference type="EC" id="2.7.4.25" evidence="1"/>
<dbReference type="EMBL" id="CP000053">
    <property type="protein sequence ID" value="AAY61621.1"/>
    <property type="molecule type" value="Genomic_DNA"/>
</dbReference>
<dbReference type="SMR" id="Q4ULF2"/>
<dbReference type="STRING" id="315456.RF_0770"/>
<dbReference type="KEGG" id="rfe:RF_0770"/>
<dbReference type="eggNOG" id="COG0283">
    <property type="taxonomic scope" value="Bacteria"/>
</dbReference>
<dbReference type="HOGENOM" id="CLU_079959_0_2_5"/>
<dbReference type="OrthoDB" id="9807434at2"/>
<dbReference type="Proteomes" id="UP000008548">
    <property type="component" value="Chromosome"/>
</dbReference>
<dbReference type="GO" id="GO:0005737">
    <property type="term" value="C:cytoplasm"/>
    <property type="evidence" value="ECO:0007669"/>
    <property type="project" value="UniProtKB-SubCell"/>
</dbReference>
<dbReference type="GO" id="GO:0005524">
    <property type="term" value="F:ATP binding"/>
    <property type="evidence" value="ECO:0007669"/>
    <property type="project" value="UniProtKB-UniRule"/>
</dbReference>
<dbReference type="GO" id="GO:0036430">
    <property type="term" value="F:CMP kinase activity"/>
    <property type="evidence" value="ECO:0007669"/>
    <property type="project" value="RHEA"/>
</dbReference>
<dbReference type="GO" id="GO:0036431">
    <property type="term" value="F:dCMP kinase activity"/>
    <property type="evidence" value="ECO:0007669"/>
    <property type="project" value="RHEA"/>
</dbReference>
<dbReference type="GO" id="GO:0006220">
    <property type="term" value="P:pyrimidine nucleotide metabolic process"/>
    <property type="evidence" value="ECO:0007669"/>
    <property type="project" value="UniProtKB-UniRule"/>
</dbReference>
<dbReference type="CDD" id="cd02020">
    <property type="entry name" value="CMPK"/>
    <property type="match status" value="1"/>
</dbReference>
<dbReference type="Gene3D" id="3.40.50.300">
    <property type="entry name" value="P-loop containing nucleotide triphosphate hydrolases"/>
    <property type="match status" value="1"/>
</dbReference>
<dbReference type="HAMAP" id="MF_00238">
    <property type="entry name" value="Cytidyl_kinase_type1"/>
    <property type="match status" value="1"/>
</dbReference>
<dbReference type="InterPro" id="IPR003136">
    <property type="entry name" value="Cytidylate_kin"/>
</dbReference>
<dbReference type="InterPro" id="IPR011994">
    <property type="entry name" value="Cytidylate_kinase_dom"/>
</dbReference>
<dbReference type="InterPro" id="IPR027417">
    <property type="entry name" value="P-loop_NTPase"/>
</dbReference>
<dbReference type="NCBIfam" id="TIGR00017">
    <property type="entry name" value="cmk"/>
    <property type="match status" value="1"/>
</dbReference>
<dbReference type="Pfam" id="PF02224">
    <property type="entry name" value="Cytidylate_kin"/>
    <property type="match status" value="1"/>
</dbReference>
<dbReference type="SUPFAM" id="SSF52540">
    <property type="entry name" value="P-loop containing nucleoside triphosphate hydrolases"/>
    <property type="match status" value="1"/>
</dbReference>
<reference key="1">
    <citation type="journal article" date="2005" name="PLoS Biol.">
        <title>The genome sequence of Rickettsia felis identifies the first putative conjugative plasmid in an obligate intracellular parasite.</title>
        <authorList>
            <person name="Ogata H."/>
            <person name="Renesto P."/>
            <person name="Audic S."/>
            <person name="Robert C."/>
            <person name="Blanc G."/>
            <person name="Fournier P.-E."/>
            <person name="Parinello H."/>
            <person name="Claverie J.-M."/>
            <person name="Raoult D."/>
        </authorList>
    </citation>
    <scope>NUCLEOTIDE SEQUENCE [LARGE SCALE GENOMIC DNA]</scope>
    <source>
        <strain>ATCC VR-1525 / URRWXCal2</strain>
    </source>
</reference>